<reference key="1">
    <citation type="journal article" date="2003" name="Nat. Genet.">
        <title>Comparative analysis of the genome sequences of Bordetella pertussis, Bordetella parapertussis and Bordetella bronchiseptica.</title>
        <authorList>
            <person name="Parkhill J."/>
            <person name="Sebaihia M."/>
            <person name="Preston A."/>
            <person name="Murphy L.D."/>
            <person name="Thomson N.R."/>
            <person name="Harris D.E."/>
            <person name="Holden M.T.G."/>
            <person name="Churcher C.M."/>
            <person name="Bentley S.D."/>
            <person name="Mungall K.L."/>
            <person name="Cerdeno-Tarraga A.-M."/>
            <person name="Temple L."/>
            <person name="James K.D."/>
            <person name="Harris B."/>
            <person name="Quail M.A."/>
            <person name="Achtman M."/>
            <person name="Atkin R."/>
            <person name="Baker S."/>
            <person name="Basham D."/>
            <person name="Bason N."/>
            <person name="Cherevach I."/>
            <person name="Chillingworth T."/>
            <person name="Collins M."/>
            <person name="Cronin A."/>
            <person name="Davis P."/>
            <person name="Doggett J."/>
            <person name="Feltwell T."/>
            <person name="Goble A."/>
            <person name="Hamlin N."/>
            <person name="Hauser H."/>
            <person name="Holroyd S."/>
            <person name="Jagels K."/>
            <person name="Leather S."/>
            <person name="Moule S."/>
            <person name="Norberczak H."/>
            <person name="O'Neil S."/>
            <person name="Ormond D."/>
            <person name="Price C."/>
            <person name="Rabbinowitsch E."/>
            <person name="Rutter S."/>
            <person name="Sanders M."/>
            <person name="Saunders D."/>
            <person name="Seeger K."/>
            <person name="Sharp S."/>
            <person name="Simmonds M."/>
            <person name="Skelton J."/>
            <person name="Squares R."/>
            <person name="Squares S."/>
            <person name="Stevens K."/>
            <person name="Unwin L."/>
            <person name="Whitehead S."/>
            <person name="Barrell B.G."/>
            <person name="Maskell D.J."/>
        </authorList>
    </citation>
    <scope>NUCLEOTIDE SEQUENCE [LARGE SCALE GENOMIC DNA]</scope>
    <source>
        <strain>12822 / ATCC BAA-587 / NCTC 13253</strain>
    </source>
</reference>
<evidence type="ECO:0000255" key="1">
    <source>
        <dbReference type="HAMAP-Rule" id="MF_01959"/>
    </source>
</evidence>
<gene>
    <name evidence="1" type="primary">ccmE</name>
    <name evidence="1" type="synonym">cycJ</name>
    <name type="ordered locus">BPP2696</name>
</gene>
<proteinExistence type="inferred from homology"/>
<protein>
    <recommendedName>
        <fullName evidence="1">Cytochrome c-type biogenesis protein CcmE</fullName>
    </recommendedName>
    <alternativeName>
        <fullName evidence="1">Cytochrome c maturation protein E</fullName>
    </alternativeName>
    <alternativeName>
        <fullName evidence="1">Heme chaperone CcmE</fullName>
    </alternativeName>
</protein>
<name>CCME_BORPA</name>
<dbReference type="EMBL" id="BX640431">
    <property type="protein sequence ID" value="CAE37988.1"/>
    <property type="molecule type" value="Genomic_DNA"/>
</dbReference>
<dbReference type="RefSeq" id="WP_010928679.1">
    <property type="nucleotide sequence ID" value="NC_002928.3"/>
</dbReference>
<dbReference type="SMR" id="Q7W740"/>
<dbReference type="GeneID" id="93204480"/>
<dbReference type="KEGG" id="bpa:BPP2696"/>
<dbReference type="HOGENOM" id="CLU_079503_1_1_4"/>
<dbReference type="Proteomes" id="UP000001421">
    <property type="component" value="Chromosome"/>
</dbReference>
<dbReference type="GO" id="GO:0005886">
    <property type="term" value="C:plasma membrane"/>
    <property type="evidence" value="ECO:0007669"/>
    <property type="project" value="UniProtKB-SubCell"/>
</dbReference>
<dbReference type="GO" id="GO:0020037">
    <property type="term" value="F:heme binding"/>
    <property type="evidence" value="ECO:0007669"/>
    <property type="project" value="InterPro"/>
</dbReference>
<dbReference type="GO" id="GO:0046872">
    <property type="term" value="F:metal ion binding"/>
    <property type="evidence" value="ECO:0007669"/>
    <property type="project" value="UniProtKB-KW"/>
</dbReference>
<dbReference type="GO" id="GO:0017004">
    <property type="term" value="P:cytochrome complex assembly"/>
    <property type="evidence" value="ECO:0007669"/>
    <property type="project" value="UniProtKB-KW"/>
</dbReference>
<dbReference type="Gene3D" id="2.40.50.140">
    <property type="entry name" value="Nucleic acid-binding proteins"/>
    <property type="match status" value="1"/>
</dbReference>
<dbReference type="HAMAP" id="MF_01959">
    <property type="entry name" value="CcmE"/>
    <property type="match status" value="1"/>
</dbReference>
<dbReference type="InterPro" id="IPR004329">
    <property type="entry name" value="CcmE"/>
</dbReference>
<dbReference type="InterPro" id="IPR036127">
    <property type="entry name" value="CcmE-like_sf"/>
</dbReference>
<dbReference type="InterPro" id="IPR012340">
    <property type="entry name" value="NA-bd_OB-fold"/>
</dbReference>
<dbReference type="NCBIfam" id="NF009727">
    <property type="entry name" value="PRK13254.1-1"/>
    <property type="match status" value="1"/>
</dbReference>
<dbReference type="NCBIfam" id="NF009729">
    <property type="entry name" value="PRK13254.1-3"/>
    <property type="match status" value="1"/>
</dbReference>
<dbReference type="NCBIfam" id="NF009731">
    <property type="entry name" value="PRK13254.1-5"/>
    <property type="match status" value="1"/>
</dbReference>
<dbReference type="PANTHER" id="PTHR34128">
    <property type="entry name" value="CYTOCHROME C-TYPE BIOGENESIS PROTEIN CCME HOMOLOG, MITOCHONDRIAL"/>
    <property type="match status" value="1"/>
</dbReference>
<dbReference type="PANTHER" id="PTHR34128:SF2">
    <property type="entry name" value="CYTOCHROME C-TYPE BIOGENESIS PROTEIN CCME HOMOLOG, MITOCHONDRIAL"/>
    <property type="match status" value="1"/>
</dbReference>
<dbReference type="Pfam" id="PF03100">
    <property type="entry name" value="CcmE"/>
    <property type="match status" value="1"/>
</dbReference>
<dbReference type="SUPFAM" id="SSF82093">
    <property type="entry name" value="Heme chaperone CcmE"/>
    <property type="match status" value="1"/>
</dbReference>
<organism>
    <name type="scientific">Bordetella parapertussis (strain 12822 / ATCC BAA-587 / NCTC 13253)</name>
    <dbReference type="NCBI Taxonomy" id="257311"/>
    <lineage>
        <taxon>Bacteria</taxon>
        <taxon>Pseudomonadati</taxon>
        <taxon>Pseudomonadota</taxon>
        <taxon>Betaproteobacteria</taxon>
        <taxon>Burkholderiales</taxon>
        <taxon>Alcaligenaceae</taxon>
        <taxon>Bordetella</taxon>
    </lineage>
</organism>
<comment type="function">
    <text evidence="1">Heme chaperone required for the biogenesis of c-type cytochromes. Transiently binds heme delivered by CcmC and transfers the heme to apo-cytochromes in a process facilitated by CcmF and CcmH.</text>
</comment>
<comment type="subcellular location">
    <subcellularLocation>
        <location evidence="1">Cell inner membrane</location>
        <topology evidence="1">Single-pass type II membrane protein</topology>
        <orientation evidence="1">Periplasmic side</orientation>
    </subcellularLocation>
</comment>
<comment type="similarity">
    <text evidence="1">Belongs to the CcmE/CycJ family.</text>
</comment>
<sequence length="153" mass="15995">MTTRRGRRALLIAGGVGLLALAAALVLNALRSNLVFFFSPTQVHAHEAPSSGSFRVGGLVRAGSVERAADGLTLRFVVTDTVREVPVAYTGLLPALFREGKGVVVAGTMGADGVFRATEVLAKHNENYMPPQAADALRQAGALPSATLQTEAR</sequence>
<feature type="chain" id="PRO_0000238797" description="Cytochrome c-type biogenesis protein CcmE">
    <location>
        <begin position="1"/>
        <end position="153"/>
    </location>
</feature>
<feature type="topological domain" description="Cytoplasmic" evidence="1">
    <location>
        <begin position="1"/>
        <end position="8"/>
    </location>
</feature>
<feature type="transmembrane region" description="Helical; Signal-anchor for type II membrane protein" evidence="1">
    <location>
        <begin position="9"/>
        <end position="29"/>
    </location>
</feature>
<feature type="topological domain" description="Periplasmic" evidence="1">
    <location>
        <begin position="30"/>
        <end position="153"/>
    </location>
</feature>
<feature type="binding site" description="covalent" evidence="1">
    <location>
        <position position="124"/>
    </location>
    <ligand>
        <name>heme</name>
        <dbReference type="ChEBI" id="CHEBI:30413"/>
    </ligand>
</feature>
<feature type="binding site" description="axial binding residue" evidence="1">
    <location>
        <position position="128"/>
    </location>
    <ligand>
        <name>heme</name>
        <dbReference type="ChEBI" id="CHEBI:30413"/>
    </ligand>
    <ligandPart>
        <name>Fe</name>
        <dbReference type="ChEBI" id="CHEBI:18248"/>
    </ligandPart>
</feature>
<accession>Q7W740</accession>
<keyword id="KW-0997">Cell inner membrane</keyword>
<keyword id="KW-1003">Cell membrane</keyword>
<keyword id="KW-0201">Cytochrome c-type biogenesis</keyword>
<keyword id="KW-0349">Heme</keyword>
<keyword id="KW-0408">Iron</keyword>
<keyword id="KW-0472">Membrane</keyword>
<keyword id="KW-0479">Metal-binding</keyword>
<keyword id="KW-0735">Signal-anchor</keyword>
<keyword id="KW-0812">Transmembrane</keyword>
<keyword id="KW-1133">Transmembrane helix</keyword>